<proteinExistence type="evidence at transcript level"/>
<protein>
    <recommendedName>
        <fullName evidence="5">Keratin-associated protein 9-3</fullName>
    </recommendedName>
    <alternativeName>
        <fullName>Keratin-associated protein 9.3</fullName>
    </alternativeName>
    <alternativeName>
        <fullName>Ultrahigh sulfur keratin-associated protein 9.3</fullName>
    </alternativeName>
</protein>
<evidence type="ECO:0000250" key="1"/>
<evidence type="ECO:0000250" key="2">
    <source>
        <dbReference type="UniProtKB" id="Q9BYQ3"/>
    </source>
</evidence>
<evidence type="ECO:0000305" key="3"/>
<evidence type="ECO:0000312" key="4">
    <source>
        <dbReference type="EMBL" id="BAE20877.1"/>
    </source>
</evidence>
<evidence type="ECO:0000312" key="5">
    <source>
        <dbReference type="EMBL" id="CAM19187.1"/>
    </source>
</evidence>
<evidence type="ECO:0000312" key="6">
    <source>
        <dbReference type="MGI" id="MGI:1922836"/>
    </source>
</evidence>
<reference evidence="4" key="1">
    <citation type="journal article" date="2005" name="Science">
        <title>The transcriptional landscape of the mammalian genome.</title>
        <authorList>
            <person name="Carninci P."/>
            <person name="Kasukawa T."/>
            <person name="Katayama S."/>
            <person name="Gough J."/>
            <person name="Frith M.C."/>
            <person name="Maeda N."/>
            <person name="Oyama R."/>
            <person name="Ravasi T."/>
            <person name="Lenhard B."/>
            <person name="Wells C."/>
            <person name="Kodzius R."/>
            <person name="Shimokawa K."/>
            <person name="Bajic V.B."/>
            <person name="Brenner S.E."/>
            <person name="Batalov S."/>
            <person name="Forrest A.R."/>
            <person name="Zavolan M."/>
            <person name="Davis M.J."/>
            <person name="Wilming L.G."/>
            <person name="Aidinis V."/>
            <person name="Allen J.E."/>
            <person name="Ambesi-Impiombato A."/>
            <person name="Apweiler R."/>
            <person name="Aturaliya R.N."/>
            <person name="Bailey T.L."/>
            <person name="Bansal M."/>
            <person name="Baxter L."/>
            <person name="Beisel K.W."/>
            <person name="Bersano T."/>
            <person name="Bono H."/>
            <person name="Chalk A.M."/>
            <person name="Chiu K.P."/>
            <person name="Choudhary V."/>
            <person name="Christoffels A."/>
            <person name="Clutterbuck D.R."/>
            <person name="Crowe M.L."/>
            <person name="Dalla E."/>
            <person name="Dalrymple B.P."/>
            <person name="de Bono B."/>
            <person name="Della Gatta G."/>
            <person name="di Bernardo D."/>
            <person name="Down T."/>
            <person name="Engstrom P."/>
            <person name="Fagiolini M."/>
            <person name="Faulkner G."/>
            <person name="Fletcher C.F."/>
            <person name="Fukushima T."/>
            <person name="Furuno M."/>
            <person name="Futaki S."/>
            <person name="Gariboldi M."/>
            <person name="Georgii-Hemming P."/>
            <person name="Gingeras T.R."/>
            <person name="Gojobori T."/>
            <person name="Green R.E."/>
            <person name="Gustincich S."/>
            <person name="Harbers M."/>
            <person name="Hayashi Y."/>
            <person name="Hensch T.K."/>
            <person name="Hirokawa N."/>
            <person name="Hill D."/>
            <person name="Huminiecki L."/>
            <person name="Iacono M."/>
            <person name="Ikeo K."/>
            <person name="Iwama A."/>
            <person name="Ishikawa T."/>
            <person name="Jakt M."/>
            <person name="Kanapin A."/>
            <person name="Katoh M."/>
            <person name="Kawasawa Y."/>
            <person name="Kelso J."/>
            <person name="Kitamura H."/>
            <person name="Kitano H."/>
            <person name="Kollias G."/>
            <person name="Krishnan S.P."/>
            <person name="Kruger A."/>
            <person name="Kummerfeld S.K."/>
            <person name="Kurochkin I.V."/>
            <person name="Lareau L.F."/>
            <person name="Lazarevic D."/>
            <person name="Lipovich L."/>
            <person name="Liu J."/>
            <person name="Liuni S."/>
            <person name="McWilliam S."/>
            <person name="Madan Babu M."/>
            <person name="Madera M."/>
            <person name="Marchionni L."/>
            <person name="Matsuda H."/>
            <person name="Matsuzawa S."/>
            <person name="Miki H."/>
            <person name="Mignone F."/>
            <person name="Miyake S."/>
            <person name="Morris K."/>
            <person name="Mottagui-Tabar S."/>
            <person name="Mulder N."/>
            <person name="Nakano N."/>
            <person name="Nakauchi H."/>
            <person name="Ng P."/>
            <person name="Nilsson R."/>
            <person name="Nishiguchi S."/>
            <person name="Nishikawa S."/>
            <person name="Nori F."/>
            <person name="Ohara O."/>
            <person name="Okazaki Y."/>
            <person name="Orlando V."/>
            <person name="Pang K.C."/>
            <person name="Pavan W.J."/>
            <person name="Pavesi G."/>
            <person name="Pesole G."/>
            <person name="Petrovsky N."/>
            <person name="Piazza S."/>
            <person name="Reed J."/>
            <person name="Reid J.F."/>
            <person name="Ring B.Z."/>
            <person name="Ringwald M."/>
            <person name="Rost B."/>
            <person name="Ruan Y."/>
            <person name="Salzberg S.L."/>
            <person name="Sandelin A."/>
            <person name="Schneider C."/>
            <person name="Schoenbach C."/>
            <person name="Sekiguchi K."/>
            <person name="Semple C.A."/>
            <person name="Seno S."/>
            <person name="Sessa L."/>
            <person name="Sheng Y."/>
            <person name="Shibata Y."/>
            <person name="Shimada H."/>
            <person name="Shimada K."/>
            <person name="Silva D."/>
            <person name="Sinclair B."/>
            <person name="Sperling S."/>
            <person name="Stupka E."/>
            <person name="Sugiura K."/>
            <person name="Sultana R."/>
            <person name="Takenaka Y."/>
            <person name="Taki K."/>
            <person name="Tammoja K."/>
            <person name="Tan S.L."/>
            <person name="Tang S."/>
            <person name="Taylor M.S."/>
            <person name="Tegner J."/>
            <person name="Teichmann S.A."/>
            <person name="Ueda H.R."/>
            <person name="van Nimwegen E."/>
            <person name="Verardo R."/>
            <person name="Wei C.L."/>
            <person name="Yagi K."/>
            <person name="Yamanishi H."/>
            <person name="Zabarovsky E."/>
            <person name="Zhu S."/>
            <person name="Zimmer A."/>
            <person name="Hide W."/>
            <person name="Bult C."/>
            <person name="Grimmond S.M."/>
            <person name="Teasdale R.D."/>
            <person name="Liu E.T."/>
            <person name="Brusic V."/>
            <person name="Quackenbush J."/>
            <person name="Wahlestedt C."/>
            <person name="Mattick J.S."/>
            <person name="Hume D.A."/>
            <person name="Kai C."/>
            <person name="Sasaki D."/>
            <person name="Tomaru Y."/>
            <person name="Fukuda S."/>
            <person name="Kanamori-Katayama M."/>
            <person name="Suzuki M."/>
            <person name="Aoki J."/>
            <person name="Arakawa T."/>
            <person name="Iida J."/>
            <person name="Imamura K."/>
            <person name="Itoh M."/>
            <person name="Kato T."/>
            <person name="Kawaji H."/>
            <person name="Kawagashira N."/>
            <person name="Kawashima T."/>
            <person name="Kojima M."/>
            <person name="Kondo S."/>
            <person name="Konno H."/>
            <person name="Nakano K."/>
            <person name="Ninomiya N."/>
            <person name="Nishio T."/>
            <person name="Okada M."/>
            <person name="Plessy C."/>
            <person name="Shibata K."/>
            <person name="Shiraki T."/>
            <person name="Suzuki S."/>
            <person name="Tagami M."/>
            <person name="Waki K."/>
            <person name="Watahiki A."/>
            <person name="Okamura-Oho Y."/>
            <person name="Suzuki H."/>
            <person name="Kawai J."/>
            <person name="Hayashizaki Y."/>
        </authorList>
    </citation>
    <scope>NUCLEOTIDE SEQUENCE [LARGE SCALE MRNA]</scope>
    <source>
        <strain evidence="4">C57BL/6J</strain>
        <tissue evidence="4">Tongue</tissue>
    </source>
</reference>
<reference key="2">
    <citation type="journal article" date="2009" name="PLoS Biol.">
        <title>Lineage-specific biology revealed by a finished genome assembly of the mouse.</title>
        <authorList>
            <person name="Church D.M."/>
            <person name="Goodstadt L."/>
            <person name="Hillier L.W."/>
            <person name="Zody M.C."/>
            <person name="Goldstein S."/>
            <person name="She X."/>
            <person name="Bult C.J."/>
            <person name="Agarwala R."/>
            <person name="Cherry J.L."/>
            <person name="DiCuccio M."/>
            <person name="Hlavina W."/>
            <person name="Kapustin Y."/>
            <person name="Meric P."/>
            <person name="Maglott D."/>
            <person name="Birtle Z."/>
            <person name="Marques A.C."/>
            <person name="Graves T."/>
            <person name="Zhou S."/>
            <person name="Teague B."/>
            <person name="Potamousis K."/>
            <person name="Churas C."/>
            <person name="Place M."/>
            <person name="Herschleb J."/>
            <person name="Runnheim R."/>
            <person name="Forrest D."/>
            <person name="Amos-Landgraf J."/>
            <person name="Schwartz D.C."/>
            <person name="Cheng Z."/>
            <person name="Lindblad-Toh K."/>
            <person name="Eichler E.E."/>
            <person name="Ponting C.P."/>
        </authorList>
    </citation>
    <scope>NUCLEOTIDE SEQUENCE [LARGE SCALE GENOMIC DNA]</scope>
    <source>
        <strain>C57BL/6J</strain>
    </source>
</reference>
<organism>
    <name type="scientific">Mus musculus</name>
    <name type="common">Mouse</name>
    <dbReference type="NCBI Taxonomy" id="10090"/>
    <lineage>
        <taxon>Eukaryota</taxon>
        <taxon>Metazoa</taxon>
        <taxon>Chordata</taxon>
        <taxon>Craniata</taxon>
        <taxon>Vertebrata</taxon>
        <taxon>Euteleostomi</taxon>
        <taxon>Mammalia</taxon>
        <taxon>Eutheria</taxon>
        <taxon>Euarchontoglires</taxon>
        <taxon>Glires</taxon>
        <taxon>Rodentia</taxon>
        <taxon>Myomorpha</taxon>
        <taxon>Muroidea</taxon>
        <taxon>Muridae</taxon>
        <taxon>Murinae</taxon>
        <taxon>Mus</taxon>
        <taxon>Mus</taxon>
    </lineage>
</organism>
<comment type="function">
    <text evidence="1">In the hair cortex, hair keratin intermediate filaments are embedded in an interfilamentous matrix, consisting of hair keratin-associated proteins (KRTAP), which are essential for the formation of a rigid and resistant hair shaft through their extensive disulfide bond cross-linking with abundant cysteine residues of hair keratins. The matrix proteins include the high-sulfur and high-glycine-tyrosine keratins (By similarity).</text>
</comment>
<comment type="subunit">
    <text evidence="1">Interacts with hair keratins.</text>
</comment>
<comment type="similarity">
    <text evidence="2">Belongs to the KRTAP type 9 family.</text>
</comment>
<sequence length="136" mass="13902">MACCATSFCGFPTCSTGGSSCCQPTCTQSSCCQPSCCEASCCQPSCCETGFGGGIGCGQEGGSGGVSCRVRWCRPDCRVEGTCLPPCCVVSCTPPTCCQLHHAQASCCRPSYCGQSCCRPACCCYCCQPSCSEPSC</sequence>
<name>KRA93_MOUSE</name>
<accession>Q3V2C1</accession>
<accession>Q9D718</accession>
<keyword id="KW-0416">Keratin</keyword>
<keyword id="KW-1185">Reference proteome</keyword>
<keyword id="KW-0677">Repeat</keyword>
<gene>
    <name evidence="6" type="primary">Krtap9-3</name>
</gene>
<feature type="chain" id="PRO_0000361043" description="Keratin-associated protein 9-3">
    <location>
        <begin position="1"/>
        <end position="136"/>
    </location>
</feature>
<feature type="repeat" description="1">
    <location>
        <begin position="3"/>
        <end position="7"/>
    </location>
</feature>
<feature type="repeat" description="2">
    <location>
        <begin position="21"/>
        <end position="25"/>
    </location>
</feature>
<feature type="repeat" description="3">
    <location>
        <begin position="31"/>
        <end position="35"/>
    </location>
</feature>
<feature type="repeat" description="4">
    <location>
        <begin position="36"/>
        <end position="40"/>
    </location>
</feature>
<feature type="repeat" description="5">
    <location>
        <begin position="41"/>
        <end position="45"/>
    </location>
</feature>
<feature type="repeat" description="6">
    <location>
        <begin position="46"/>
        <end position="50"/>
    </location>
</feature>
<feature type="repeat" description="7">
    <location>
        <begin position="87"/>
        <end position="91"/>
    </location>
</feature>
<feature type="repeat" description="8">
    <location>
        <begin position="97"/>
        <end position="101"/>
    </location>
</feature>
<feature type="repeat" description="9">
    <location>
        <begin position="107"/>
        <end position="111"/>
    </location>
</feature>
<feature type="repeat" description="10">
    <location>
        <begin position="117"/>
        <end position="121"/>
    </location>
</feature>
<feature type="repeat" description="11">
    <location>
        <begin position="126"/>
        <end position="130"/>
    </location>
</feature>
<feature type="region of interest" description="11 X 5 AA repeats of C-C-[AEQVR]-[ALPTV]-[AGHST]">
    <location>
        <begin position="21"/>
        <end position="130"/>
    </location>
</feature>
<feature type="sequence conflict" description="In Ref. 1; BAB26467." evidence="3" ref="1">
    <original>R</original>
    <variation>K</variation>
    <location>
        <position position="71"/>
    </location>
</feature>
<feature type="sequence conflict" description="In Ref. 1; BAB26467." evidence="3" ref="1">
    <original>S</original>
    <variation>F</variation>
    <location>
        <position position="132"/>
    </location>
</feature>
<dbReference type="EMBL" id="AK009730">
    <property type="protein sequence ID" value="BAB26467.1"/>
    <property type="molecule type" value="mRNA"/>
</dbReference>
<dbReference type="EMBL" id="AK131927">
    <property type="protein sequence ID" value="BAE20877.1"/>
    <property type="molecule type" value="mRNA"/>
</dbReference>
<dbReference type="EMBL" id="AL591417">
    <property type="protein sequence ID" value="CAM19187.1"/>
    <property type="molecule type" value="Genomic_DNA"/>
</dbReference>
<dbReference type="CCDS" id="CCDS36311.1"/>
<dbReference type="RefSeq" id="NP_083627.2">
    <property type="nucleotide sequence ID" value="NM_029351.2"/>
</dbReference>
<dbReference type="FunCoup" id="Q3V2C1">
    <property type="interactions" value="72"/>
</dbReference>
<dbReference type="STRING" id="10090.ENSMUSP00000057445"/>
<dbReference type="PaxDb" id="10090-ENSMUSP00000057445"/>
<dbReference type="DNASU" id="75586"/>
<dbReference type="Ensembl" id="ENSMUST00000062683.3">
    <property type="protein sequence ID" value="ENSMUSP00000057445.3"/>
    <property type="gene ID" value="ENSMUSG00000049809.3"/>
</dbReference>
<dbReference type="GeneID" id="75586"/>
<dbReference type="KEGG" id="mmu:75586"/>
<dbReference type="UCSC" id="uc007ljf.1">
    <property type="organism name" value="mouse"/>
</dbReference>
<dbReference type="AGR" id="MGI:1922836"/>
<dbReference type="CTD" id="83900"/>
<dbReference type="MGI" id="MGI:1922836">
    <property type="gene designation" value="Krtap9-3"/>
</dbReference>
<dbReference type="VEuPathDB" id="HostDB:ENSMUSG00000049809"/>
<dbReference type="eggNOG" id="KOG4726">
    <property type="taxonomic scope" value="Eukaryota"/>
</dbReference>
<dbReference type="GeneTree" id="ENSGT00940000160295"/>
<dbReference type="HOGENOM" id="CLU_109417_0_0_1"/>
<dbReference type="InParanoid" id="Q3V2C1"/>
<dbReference type="OMA" id="CYSCEPT"/>
<dbReference type="PhylomeDB" id="Q3V2C1"/>
<dbReference type="TreeFam" id="TF351356"/>
<dbReference type="Reactome" id="R-MMU-6805567">
    <property type="pathway name" value="Keratinization"/>
</dbReference>
<dbReference type="BioGRID-ORCS" id="75586">
    <property type="hits" value="3 hits in 76 CRISPR screens"/>
</dbReference>
<dbReference type="PRO" id="PR:Q3V2C1"/>
<dbReference type="Proteomes" id="UP000000589">
    <property type="component" value="Chromosome 11"/>
</dbReference>
<dbReference type="RNAct" id="Q3V2C1">
    <property type="molecule type" value="protein"/>
</dbReference>
<dbReference type="Bgee" id="ENSMUSG00000049809">
    <property type="expression patterns" value="Expressed in lip and 29 other cell types or tissues"/>
</dbReference>
<dbReference type="GO" id="GO:0005829">
    <property type="term" value="C:cytosol"/>
    <property type="evidence" value="ECO:0007669"/>
    <property type="project" value="UniProtKB-ARBA"/>
</dbReference>
<dbReference type="GO" id="GO:0045095">
    <property type="term" value="C:keratin filament"/>
    <property type="evidence" value="ECO:0007669"/>
    <property type="project" value="InterPro"/>
</dbReference>
<dbReference type="InterPro" id="IPR002494">
    <property type="entry name" value="KAP"/>
</dbReference>
<dbReference type="Pfam" id="PF01500">
    <property type="entry name" value="Keratin_B2"/>
    <property type="match status" value="1"/>
</dbReference>